<keyword id="KW-0066">ATP synthesis</keyword>
<keyword id="KW-0067">ATP-binding</keyword>
<keyword id="KW-1003">Cell membrane</keyword>
<keyword id="KW-0139">CF(1)</keyword>
<keyword id="KW-0375">Hydrogen ion transport</keyword>
<keyword id="KW-0406">Ion transport</keyword>
<keyword id="KW-0472">Membrane</keyword>
<keyword id="KW-0547">Nucleotide-binding</keyword>
<keyword id="KW-1278">Translocase</keyword>
<keyword id="KW-0813">Transport</keyword>
<reference key="1">
    <citation type="journal article" date="2004" name="Proc. Natl. Acad. Sci. U.S.A.">
        <title>Complete genomes of two clinical Staphylococcus aureus strains: evidence for the rapid evolution of virulence and drug resistance.</title>
        <authorList>
            <person name="Holden M.T.G."/>
            <person name="Feil E.J."/>
            <person name="Lindsay J.A."/>
            <person name="Peacock S.J."/>
            <person name="Day N.P.J."/>
            <person name="Enright M.C."/>
            <person name="Foster T.J."/>
            <person name="Moore C.E."/>
            <person name="Hurst L."/>
            <person name="Atkin R."/>
            <person name="Barron A."/>
            <person name="Bason N."/>
            <person name="Bentley S.D."/>
            <person name="Chillingworth C."/>
            <person name="Chillingworth T."/>
            <person name="Churcher C."/>
            <person name="Clark L."/>
            <person name="Corton C."/>
            <person name="Cronin A."/>
            <person name="Doggett J."/>
            <person name="Dowd L."/>
            <person name="Feltwell T."/>
            <person name="Hance Z."/>
            <person name="Harris B."/>
            <person name="Hauser H."/>
            <person name="Holroyd S."/>
            <person name="Jagels K."/>
            <person name="James K.D."/>
            <person name="Lennard N."/>
            <person name="Line A."/>
            <person name="Mayes R."/>
            <person name="Moule S."/>
            <person name="Mungall K."/>
            <person name="Ormond D."/>
            <person name="Quail M.A."/>
            <person name="Rabbinowitsch E."/>
            <person name="Rutherford K.M."/>
            <person name="Sanders M."/>
            <person name="Sharp S."/>
            <person name="Simmonds M."/>
            <person name="Stevens K."/>
            <person name="Whitehead S."/>
            <person name="Barrell B.G."/>
            <person name="Spratt B.G."/>
            <person name="Parkhill J."/>
        </authorList>
    </citation>
    <scope>NUCLEOTIDE SEQUENCE [LARGE SCALE GENOMIC DNA]</scope>
    <source>
        <strain>MRSA252</strain>
    </source>
</reference>
<feature type="chain" id="PRO_0000144471" description="ATP synthase subunit beta">
    <location>
        <begin position="1"/>
        <end position="470"/>
    </location>
</feature>
<feature type="binding site" evidence="1">
    <location>
        <begin position="155"/>
        <end position="162"/>
    </location>
    <ligand>
        <name>ATP</name>
        <dbReference type="ChEBI" id="CHEBI:30616"/>
    </ligand>
</feature>
<organism>
    <name type="scientific">Staphylococcus aureus (strain MRSA252)</name>
    <dbReference type="NCBI Taxonomy" id="282458"/>
    <lineage>
        <taxon>Bacteria</taxon>
        <taxon>Bacillati</taxon>
        <taxon>Bacillota</taxon>
        <taxon>Bacilli</taxon>
        <taxon>Bacillales</taxon>
        <taxon>Staphylococcaceae</taxon>
        <taxon>Staphylococcus</taxon>
    </lineage>
</organism>
<comment type="function">
    <text evidence="1">Produces ATP from ADP in the presence of a proton gradient across the membrane. The catalytic sites are hosted primarily by the beta subunits.</text>
</comment>
<comment type="catalytic activity">
    <reaction evidence="1">
        <text>ATP + H2O + 4 H(+)(in) = ADP + phosphate + 5 H(+)(out)</text>
        <dbReference type="Rhea" id="RHEA:57720"/>
        <dbReference type="ChEBI" id="CHEBI:15377"/>
        <dbReference type="ChEBI" id="CHEBI:15378"/>
        <dbReference type="ChEBI" id="CHEBI:30616"/>
        <dbReference type="ChEBI" id="CHEBI:43474"/>
        <dbReference type="ChEBI" id="CHEBI:456216"/>
        <dbReference type="EC" id="7.1.2.2"/>
    </reaction>
</comment>
<comment type="subunit">
    <text evidence="1">F-type ATPases have 2 components, CF(1) - the catalytic core - and CF(0) - the membrane proton channel. CF(1) has five subunits: alpha(3), beta(3), gamma(1), delta(1), epsilon(1). CF(0) has three main subunits: a(1), b(2) and c(9-12). The alpha and beta chains form an alternating ring which encloses part of the gamma chain. CF(1) is attached to CF(0) by a central stalk formed by the gamma and epsilon chains, while a peripheral stalk is formed by the delta and b chains.</text>
</comment>
<comment type="subcellular location">
    <subcellularLocation>
        <location evidence="1">Cell membrane</location>
        <topology evidence="1">Peripheral membrane protein</topology>
    </subcellularLocation>
</comment>
<comment type="similarity">
    <text evidence="1">Belongs to the ATPase alpha/beta chains family.</text>
</comment>
<sequence>MGIGRVTQVMGPVIDVRFEHNEVPKINNALVIDVPKEEGTIQLTLEVALQLGDDVVRTIAMDSTDGVQRGMDVKDTGKEISVPVGDETLGRVFNVLGETIDLKEEISDSVRRDPIHRQAPAFDELSTEVQILETGIKVVDLLAPYIKGGKIGLFGGAGVGKTVLIQELINNIAQEHGGISVFAGVGERTREGNDLYFEMSDSGVIKKTAMVFGQMNEPPGARMRVALSGLTMAEYFRDEQGQDVLLFIDNIFRFTQAGSEVSALLGRMPSAVGYQPTLATEMGQLQERITSTTKGSVTSIQAVFVPADDYTDPAPATAFAHLDATTNLERKLTEMGIYPAVDPLASTSRALEPSIVGQEHYEVARDVQSTLQKYRELQDIIAILGMDELSDEDKQTVERARRIQFFLSQNFHVAEQFTGQKGSYVPVKTTVANFKDILDGKYDHIPEDAFRLVGSMDDVIAKAKDMGVEV</sequence>
<accession>Q6GEX2</accession>
<gene>
    <name evidence="1" type="primary">atpD</name>
    <name type="ordered locus">SAR2191</name>
</gene>
<evidence type="ECO:0000255" key="1">
    <source>
        <dbReference type="HAMAP-Rule" id="MF_01347"/>
    </source>
</evidence>
<proteinExistence type="inferred from homology"/>
<dbReference type="EC" id="7.1.2.2" evidence="1"/>
<dbReference type="EMBL" id="BX571856">
    <property type="protein sequence ID" value="CAG41172.1"/>
    <property type="molecule type" value="Genomic_DNA"/>
</dbReference>
<dbReference type="RefSeq" id="WP_000511135.1">
    <property type="nucleotide sequence ID" value="NC_002952.2"/>
</dbReference>
<dbReference type="SMR" id="Q6GEX2"/>
<dbReference type="GeneID" id="98346410"/>
<dbReference type="KEGG" id="sar:SAR2191"/>
<dbReference type="HOGENOM" id="CLU_022398_0_2_9"/>
<dbReference type="Proteomes" id="UP000000596">
    <property type="component" value="Chromosome"/>
</dbReference>
<dbReference type="GO" id="GO:0005886">
    <property type="term" value="C:plasma membrane"/>
    <property type="evidence" value="ECO:0007669"/>
    <property type="project" value="UniProtKB-SubCell"/>
</dbReference>
<dbReference type="GO" id="GO:0045259">
    <property type="term" value="C:proton-transporting ATP synthase complex"/>
    <property type="evidence" value="ECO:0007669"/>
    <property type="project" value="UniProtKB-KW"/>
</dbReference>
<dbReference type="GO" id="GO:0005524">
    <property type="term" value="F:ATP binding"/>
    <property type="evidence" value="ECO:0007669"/>
    <property type="project" value="UniProtKB-UniRule"/>
</dbReference>
<dbReference type="GO" id="GO:0016887">
    <property type="term" value="F:ATP hydrolysis activity"/>
    <property type="evidence" value="ECO:0007669"/>
    <property type="project" value="InterPro"/>
</dbReference>
<dbReference type="GO" id="GO:0046933">
    <property type="term" value="F:proton-transporting ATP synthase activity, rotational mechanism"/>
    <property type="evidence" value="ECO:0007669"/>
    <property type="project" value="UniProtKB-UniRule"/>
</dbReference>
<dbReference type="CDD" id="cd18110">
    <property type="entry name" value="ATP-synt_F1_beta_C"/>
    <property type="match status" value="1"/>
</dbReference>
<dbReference type="CDD" id="cd18115">
    <property type="entry name" value="ATP-synt_F1_beta_N"/>
    <property type="match status" value="1"/>
</dbReference>
<dbReference type="CDD" id="cd01133">
    <property type="entry name" value="F1-ATPase_beta_CD"/>
    <property type="match status" value="1"/>
</dbReference>
<dbReference type="FunFam" id="1.10.1140.10:FF:000001">
    <property type="entry name" value="ATP synthase subunit beta"/>
    <property type="match status" value="1"/>
</dbReference>
<dbReference type="FunFam" id="2.40.10.170:FF:000005">
    <property type="entry name" value="ATP synthase subunit beta"/>
    <property type="match status" value="1"/>
</dbReference>
<dbReference type="FunFam" id="3.40.50.300:FF:000004">
    <property type="entry name" value="ATP synthase subunit beta"/>
    <property type="match status" value="1"/>
</dbReference>
<dbReference type="Gene3D" id="2.40.10.170">
    <property type="match status" value="1"/>
</dbReference>
<dbReference type="Gene3D" id="1.10.1140.10">
    <property type="entry name" value="Bovine Mitochondrial F1-atpase, Atp Synthase Beta Chain, Chain D, domain 3"/>
    <property type="match status" value="1"/>
</dbReference>
<dbReference type="Gene3D" id="3.40.50.300">
    <property type="entry name" value="P-loop containing nucleotide triphosphate hydrolases"/>
    <property type="match status" value="1"/>
</dbReference>
<dbReference type="HAMAP" id="MF_01347">
    <property type="entry name" value="ATP_synth_beta_bact"/>
    <property type="match status" value="1"/>
</dbReference>
<dbReference type="InterPro" id="IPR003593">
    <property type="entry name" value="AAA+_ATPase"/>
</dbReference>
<dbReference type="InterPro" id="IPR055190">
    <property type="entry name" value="ATP-synt_VA_C"/>
</dbReference>
<dbReference type="InterPro" id="IPR005722">
    <property type="entry name" value="ATP_synth_F1_bsu"/>
</dbReference>
<dbReference type="InterPro" id="IPR020003">
    <property type="entry name" value="ATPase_a/bsu_AS"/>
</dbReference>
<dbReference type="InterPro" id="IPR050053">
    <property type="entry name" value="ATPase_alpha/beta_chains"/>
</dbReference>
<dbReference type="InterPro" id="IPR004100">
    <property type="entry name" value="ATPase_F1/V1/A1_a/bsu_N"/>
</dbReference>
<dbReference type="InterPro" id="IPR036121">
    <property type="entry name" value="ATPase_F1/V1/A1_a/bsu_N_sf"/>
</dbReference>
<dbReference type="InterPro" id="IPR000194">
    <property type="entry name" value="ATPase_F1/V1/A1_a/bsu_nucl-bd"/>
</dbReference>
<dbReference type="InterPro" id="IPR024034">
    <property type="entry name" value="ATPase_F1/V1_b/a_C"/>
</dbReference>
<dbReference type="InterPro" id="IPR027417">
    <property type="entry name" value="P-loop_NTPase"/>
</dbReference>
<dbReference type="NCBIfam" id="TIGR01039">
    <property type="entry name" value="atpD"/>
    <property type="match status" value="1"/>
</dbReference>
<dbReference type="PANTHER" id="PTHR15184">
    <property type="entry name" value="ATP SYNTHASE"/>
    <property type="match status" value="1"/>
</dbReference>
<dbReference type="PANTHER" id="PTHR15184:SF71">
    <property type="entry name" value="ATP SYNTHASE SUBUNIT BETA, MITOCHONDRIAL"/>
    <property type="match status" value="1"/>
</dbReference>
<dbReference type="Pfam" id="PF00006">
    <property type="entry name" value="ATP-synt_ab"/>
    <property type="match status" value="1"/>
</dbReference>
<dbReference type="Pfam" id="PF02874">
    <property type="entry name" value="ATP-synt_ab_N"/>
    <property type="match status" value="1"/>
</dbReference>
<dbReference type="Pfam" id="PF22919">
    <property type="entry name" value="ATP-synt_VA_C"/>
    <property type="match status" value="1"/>
</dbReference>
<dbReference type="SMART" id="SM00382">
    <property type="entry name" value="AAA"/>
    <property type="match status" value="1"/>
</dbReference>
<dbReference type="SUPFAM" id="SSF47917">
    <property type="entry name" value="C-terminal domain of alpha and beta subunits of F1 ATP synthase"/>
    <property type="match status" value="1"/>
</dbReference>
<dbReference type="SUPFAM" id="SSF50615">
    <property type="entry name" value="N-terminal domain of alpha and beta subunits of F1 ATP synthase"/>
    <property type="match status" value="1"/>
</dbReference>
<dbReference type="SUPFAM" id="SSF52540">
    <property type="entry name" value="P-loop containing nucleoside triphosphate hydrolases"/>
    <property type="match status" value="1"/>
</dbReference>
<dbReference type="PROSITE" id="PS00152">
    <property type="entry name" value="ATPASE_ALPHA_BETA"/>
    <property type="match status" value="1"/>
</dbReference>
<name>ATPB_STAAR</name>
<protein>
    <recommendedName>
        <fullName evidence="1">ATP synthase subunit beta</fullName>
        <ecNumber evidence="1">7.1.2.2</ecNumber>
    </recommendedName>
    <alternativeName>
        <fullName evidence="1">ATP synthase F1 sector subunit beta</fullName>
    </alternativeName>
    <alternativeName>
        <fullName evidence="1">F-ATPase subunit beta</fullName>
    </alternativeName>
</protein>